<evidence type="ECO:0000255" key="1">
    <source>
        <dbReference type="HAMAP-Rule" id="MF_04033"/>
    </source>
</evidence>
<protein>
    <recommendedName>
        <fullName evidence="1">Envelope glycoprotein H</fullName>
        <shortName evidence="1">gH</shortName>
    </recommendedName>
</protein>
<dbReference type="EMBL" id="X58867">
    <property type="protein sequence ID" value="CAA41677.1"/>
    <property type="molecule type" value="Genomic_DNA"/>
</dbReference>
<dbReference type="EMBL" id="Z78205">
    <property type="protein sequence ID" value="CAB01604.1"/>
    <property type="molecule type" value="Genomic_DNA"/>
</dbReference>
<dbReference type="EMBL" id="AJ004801">
    <property type="protein sequence ID" value="CAA06112.1"/>
    <property type="molecule type" value="Genomic_DNA"/>
</dbReference>
<dbReference type="PIR" id="S18462">
    <property type="entry name" value="S18462"/>
</dbReference>
<dbReference type="RefSeq" id="NP_045337.1">
    <property type="nucleotide sequence ID" value="NC_001847.1"/>
</dbReference>
<dbReference type="SMR" id="P27599"/>
<dbReference type="GlyCosmos" id="P27599">
    <property type="glycosylation" value="6 sites, No reported glycans"/>
</dbReference>
<dbReference type="Proteomes" id="UP000202075">
    <property type="component" value="Segment"/>
</dbReference>
<dbReference type="GO" id="GO:0044175">
    <property type="term" value="C:host cell endosome membrane"/>
    <property type="evidence" value="ECO:0007669"/>
    <property type="project" value="UniProtKB-SubCell"/>
</dbReference>
<dbReference type="GO" id="GO:0020002">
    <property type="term" value="C:host cell plasma membrane"/>
    <property type="evidence" value="ECO:0007669"/>
    <property type="project" value="UniProtKB-SubCell"/>
</dbReference>
<dbReference type="GO" id="GO:0016020">
    <property type="term" value="C:membrane"/>
    <property type="evidence" value="ECO:0007669"/>
    <property type="project" value="UniProtKB-KW"/>
</dbReference>
<dbReference type="GO" id="GO:0019031">
    <property type="term" value="C:viral envelope"/>
    <property type="evidence" value="ECO:0007669"/>
    <property type="project" value="UniProtKB-KW"/>
</dbReference>
<dbReference type="GO" id="GO:0055036">
    <property type="term" value="C:virion membrane"/>
    <property type="evidence" value="ECO:0007669"/>
    <property type="project" value="UniProtKB-SubCell"/>
</dbReference>
<dbReference type="GO" id="GO:0019064">
    <property type="term" value="P:fusion of virus membrane with host plasma membrane"/>
    <property type="evidence" value="ECO:0007669"/>
    <property type="project" value="UniProtKB-KW"/>
</dbReference>
<dbReference type="GO" id="GO:0046718">
    <property type="term" value="P:symbiont entry into host cell"/>
    <property type="evidence" value="ECO:0007669"/>
    <property type="project" value="UniProtKB-KW"/>
</dbReference>
<dbReference type="FunFam" id="1.20.58.1340:FF:000001">
    <property type="entry name" value="Envelope glycoprotein H"/>
    <property type="match status" value="1"/>
</dbReference>
<dbReference type="Gene3D" id="1.20.58.1340">
    <property type="match status" value="1"/>
</dbReference>
<dbReference type="Gene3D" id="3.30.500.50">
    <property type="match status" value="1"/>
</dbReference>
<dbReference type="Gene3D" id="2.60.40.3190">
    <property type="entry name" value="Herpesvirus glycoprotein H, C-terminal domain"/>
    <property type="match status" value="1"/>
</dbReference>
<dbReference type="HAMAP" id="MF_04033">
    <property type="entry name" value="HSV_GH"/>
    <property type="match status" value="1"/>
</dbReference>
<dbReference type="InterPro" id="IPR003493">
    <property type="entry name" value="Herpes_gH"/>
</dbReference>
<dbReference type="InterPro" id="IPR035305">
    <property type="entry name" value="Herpes_glycoH_C"/>
</dbReference>
<dbReference type="InterPro" id="IPR038172">
    <property type="entry name" value="Herpes_glycoH_C_sf"/>
</dbReference>
<dbReference type="Pfam" id="PF17488">
    <property type="entry name" value="Herpes_glycoH_C"/>
    <property type="match status" value="1"/>
</dbReference>
<organismHost>
    <name type="scientific">Bos taurus</name>
    <name type="common">Bovine</name>
    <dbReference type="NCBI Taxonomy" id="9913"/>
</organismHost>
<comment type="function">
    <text evidence="1">The heterodimer glycoprotein H-glycoprotein L is required for the fusion of viral and plasma membranes leading to virus entry into the host cell. Following initial binding to host receptor, membrane fusion is mediated by the fusion machinery composed of gB and the heterodimer gH/gL. May also be involved in the fusion between the virion envelope and the outer nuclear membrane during virion morphogenesis.</text>
</comment>
<comment type="subunit">
    <text evidence="1">Interacts with glycoprotein L (gL); this interaction is necessary for the correct processing and cell surface expression of gH. The heterodimer gH/gL seems to interact with gB trimers during fusion.</text>
</comment>
<comment type="subcellular location">
    <subcellularLocation>
        <location evidence="1">Virion membrane</location>
        <topology evidence="1">Single-pass type I membrane protein</topology>
    </subcellularLocation>
    <subcellularLocation>
        <location evidence="1">Host cell membrane</location>
        <topology evidence="1">Single-pass type I membrane protein</topology>
    </subcellularLocation>
    <subcellularLocation>
        <location evidence="1">Host endosome membrane</location>
        <topology evidence="1">Single-pass type I membrane protein</topology>
    </subcellularLocation>
    <text evidence="1">During virion morphogenesis, this protein probably accumulates in the endosomes and trans-Golgi where secondary envelopment occurs. It is probably transported to the cell surface from where it is endocytosed and directed to the trans-Golgi network (TGN).</text>
</comment>
<comment type="PTM">
    <text evidence="1">N-glycosylated, O-glycosylated, and sialylated.</text>
</comment>
<comment type="similarity">
    <text evidence="1">Belongs to the herpesviridae glycoprotein H family.</text>
</comment>
<proteinExistence type="inferred from homology"/>
<organism>
    <name type="scientific">Bovine herpesvirus 1.1 (strain Cooper)</name>
    <name type="common">BoHV-1</name>
    <name type="synonym">Infectious bovine rhinotracheitis virus</name>
    <dbReference type="NCBI Taxonomy" id="10323"/>
    <lineage>
        <taxon>Viruses</taxon>
        <taxon>Duplodnaviria</taxon>
        <taxon>Heunggongvirae</taxon>
        <taxon>Peploviricota</taxon>
        <taxon>Herviviricetes</taxon>
        <taxon>Herpesvirales</taxon>
        <taxon>Orthoherpesviridae</taxon>
        <taxon>Alphaherpesvirinae</taxon>
        <taxon>Varicellovirus</taxon>
        <taxon>Varicellovirus bovinealpha1</taxon>
    </lineage>
</organism>
<feature type="signal peptide" evidence="1">
    <location>
        <begin position="1"/>
        <end position="20"/>
    </location>
</feature>
<feature type="chain" id="PRO_0000436647" description="Envelope glycoprotein H" evidence="1">
    <location>
        <begin position="21"/>
        <end position="842"/>
    </location>
</feature>
<feature type="topological domain" description="Virion surface" evidence="1">
    <location>
        <begin position="21"/>
        <end position="802"/>
    </location>
</feature>
<feature type="transmembrane region" description="Helical" evidence="1">
    <location>
        <begin position="803"/>
        <end position="823"/>
    </location>
</feature>
<feature type="topological domain" description="Intravirion" evidence="1">
    <location>
        <begin position="824"/>
        <end position="842"/>
    </location>
</feature>
<feature type="region of interest" description="Interaction with gL" evidence="1">
    <location>
        <begin position="240"/>
        <end position="303"/>
    </location>
</feature>
<feature type="glycosylation site" description="N-linked (GlcNAc...) asparagine; by host" evidence="1">
    <location>
        <position position="77"/>
    </location>
</feature>
<feature type="glycosylation site" description="N-linked (GlcNAc...) asparagine; by host" evidence="1">
    <location>
        <position position="112"/>
    </location>
</feature>
<feature type="glycosylation site" description="N-linked (GlcNAc...) asparagine; by host" evidence="1">
    <location>
        <position position="617"/>
    </location>
</feature>
<feature type="glycosylation site" description="N-linked (GlcNAc...) asparagine; by host" evidence="1">
    <location>
        <position position="666"/>
    </location>
</feature>
<feature type="glycosylation site" description="N-linked (GlcNAc...) asparagine; by host" evidence="1">
    <location>
        <position position="760"/>
    </location>
</feature>
<feature type="glycosylation site" description="N-linked (GlcNAc...) asparagine; by host" evidence="1">
    <location>
        <position position="783"/>
    </location>
</feature>
<accession>P27599</accession>
<reference key="1">
    <citation type="journal article" date="1991" name="Biochim. Biophys. Acta">
        <title>Cloning and sequence of an infectious bovine rhinotracheitis virus (BHV-1) gene homologous to glycoprotein H of herpes simplex virus.</title>
        <authorList>
            <person name="Meyer A.L."/>
            <person name="Petrovskis E.A."/>
            <person name="Duffus W.P."/>
            <person name="Thomsen D.R."/>
            <person name="Post L.E."/>
        </authorList>
    </citation>
    <scope>NUCLEOTIDE SEQUENCE [GENOMIC DNA]</scope>
</reference>
<reference key="2">
    <citation type="submission" date="1997-09" db="EMBL/GenBank/DDBJ databases">
        <title>Complete DNA sequence of bovine herpesvirus 1.</title>
        <authorList>
            <person name="Schwyzer M."/>
            <person name="Paces V."/>
            <person name="Letchworth G.J."/>
            <person name="Misra V."/>
            <person name="Buhk H.J."/>
            <person name="Lowery D.E."/>
            <person name="Simard C."/>
            <person name="Bello L.J."/>
            <person name="Thiry E."/>
            <person name="Vlcek C."/>
        </authorList>
    </citation>
    <scope>NUCLEOTIDE SEQUENCE [LARGE SCALE GENOMIC DNA]</scope>
</reference>
<name>GH_BHV1C</name>
<keyword id="KW-1169">Fusion of virus membrane with host cell membrane</keyword>
<keyword id="KW-1168">Fusion of virus membrane with host membrane</keyword>
<keyword id="KW-0325">Glycoprotein</keyword>
<keyword id="KW-1032">Host cell membrane</keyword>
<keyword id="KW-1039">Host endosome</keyword>
<keyword id="KW-1043">Host membrane</keyword>
<keyword id="KW-0472">Membrane</keyword>
<keyword id="KW-0730">Sialic acid</keyword>
<keyword id="KW-0732">Signal</keyword>
<keyword id="KW-0812">Transmembrane</keyword>
<keyword id="KW-1133">Transmembrane helix</keyword>
<keyword id="KW-0261">Viral envelope protein</keyword>
<keyword id="KW-1162">Viral penetration into host cytoplasm</keyword>
<keyword id="KW-0946">Virion</keyword>
<keyword id="KW-1160">Virus entry into host cell</keyword>
<sequence>MRRPLCAALLAAAVLALAAGAPAAARGGAGGRSREHRDARYEIEEWEMVVGAGPAVHTFTIRCLGPRGIERVAHIANLSRLLDGYIAVHVDVARTSGLRDTMFFLPRAAVDNASAADIPDTPAVQSHPGLFGAAFSWSYLQTRHLVDYDLVPSRPLQDWYFSQARAESNAARPPPAPRVTPTPAGRVAAFDINDVLASGPEHFFVPVRADRKRRERHVADFAAVWPVSYIPAGRAVLSCERAAARLAVGLGFLSVSVTSRDLLPLEFMVAPADANVRMITAFNGGGAFPPPGPAAGPQRRAYVIGYGNSRLDSHMYLTMREVASYANEPADFRAHLTAAHREAFLMLREAAAARRGPSAGPAPNAAYHAYRVAARLGLALSALTEGALADGYVLAEELVDLDYHLKLLSRVLLGAGLGCAANGRVRARTIAQLAVPRELRPDAFIPEPAGAALESVVARGRKLRAVYAFSGPDAPLAARLLAHGVVSDLYDAFLRGELTWGPPMRHALFFAVAASAFPADAQALELARDVTRKCTAMCTAGHATAAALDLEEVYAHVGGGAGGDAGFELLDAFSPCMASFRLDLLEEAHVLDVLSAVPARAALDAWLEAQPAAAAPNLSAAALGMLGRGGLFGPAHAAALAPELFAAPCGGWGAGAAVAIVPVAPNASYVITRAHPRRGLTYTLQGIDVANPLLVTFVRGTSCVSASGAVEARRLAVPGPLDACAYCGSVFVRYLPSGAVMDIVLIADKRTEVEFSRGANSSMPVFNPRLHSGRSRAMLLFPNGTVVSVLAFAGHEAPTFSPAYVWASVGGALVAGTTIYAIAKMLCSSVPLARGYSSVPVF</sequence>
<gene>
    <name evidence="1" type="primary">gH</name>
    <name type="ORF">UL22</name>
</gene>